<organism>
    <name type="scientific">Actinobacillus pleuropneumoniae serotype 7 (strain AP76)</name>
    <dbReference type="NCBI Taxonomy" id="537457"/>
    <lineage>
        <taxon>Bacteria</taxon>
        <taxon>Pseudomonadati</taxon>
        <taxon>Pseudomonadota</taxon>
        <taxon>Gammaproteobacteria</taxon>
        <taxon>Pasteurellales</taxon>
        <taxon>Pasteurellaceae</taxon>
        <taxon>Actinobacillus</taxon>
    </lineage>
</organism>
<evidence type="ECO:0000255" key="1">
    <source>
        <dbReference type="HAMAP-Rule" id="MF_00011"/>
    </source>
</evidence>
<accession>B3H1V8</accession>
<gene>
    <name evidence="1" type="primary">purA</name>
    <name type="ordered locus">APP7_1133</name>
</gene>
<protein>
    <recommendedName>
        <fullName evidence="1">Adenylosuccinate synthetase</fullName>
        <shortName evidence="1">AMPSase</shortName>
        <shortName evidence="1">AdSS</shortName>
        <ecNumber evidence="1">6.3.4.4</ecNumber>
    </recommendedName>
    <alternativeName>
        <fullName evidence="1">IMP--aspartate ligase</fullName>
    </alternativeName>
</protein>
<comment type="function">
    <text evidence="1">Plays an important role in the de novo pathway of purine nucleotide biosynthesis. Catalyzes the first committed step in the biosynthesis of AMP from IMP.</text>
</comment>
<comment type="catalytic activity">
    <reaction evidence="1">
        <text>IMP + L-aspartate + GTP = N(6)-(1,2-dicarboxyethyl)-AMP + GDP + phosphate + 2 H(+)</text>
        <dbReference type="Rhea" id="RHEA:15753"/>
        <dbReference type="ChEBI" id="CHEBI:15378"/>
        <dbReference type="ChEBI" id="CHEBI:29991"/>
        <dbReference type="ChEBI" id="CHEBI:37565"/>
        <dbReference type="ChEBI" id="CHEBI:43474"/>
        <dbReference type="ChEBI" id="CHEBI:57567"/>
        <dbReference type="ChEBI" id="CHEBI:58053"/>
        <dbReference type="ChEBI" id="CHEBI:58189"/>
        <dbReference type="EC" id="6.3.4.4"/>
    </reaction>
</comment>
<comment type="cofactor">
    <cofactor evidence="1">
        <name>Mg(2+)</name>
        <dbReference type="ChEBI" id="CHEBI:18420"/>
    </cofactor>
    <text evidence="1">Binds 1 Mg(2+) ion per subunit.</text>
</comment>
<comment type="pathway">
    <text evidence="1">Purine metabolism; AMP biosynthesis via de novo pathway; AMP from IMP: step 1/2.</text>
</comment>
<comment type="subunit">
    <text evidence="1">Homodimer.</text>
</comment>
<comment type="subcellular location">
    <subcellularLocation>
        <location evidence="1">Cytoplasm</location>
    </subcellularLocation>
</comment>
<comment type="similarity">
    <text evidence="1">Belongs to the adenylosuccinate synthetase family.</text>
</comment>
<name>PURA_ACTP7</name>
<keyword id="KW-0963">Cytoplasm</keyword>
<keyword id="KW-0342">GTP-binding</keyword>
<keyword id="KW-0436">Ligase</keyword>
<keyword id="KW-0460">Magnesium</keyword>
<keyword id="KW-0479">Metal-binding</keyword>
<keyword id="KW-0547">Nucleotide-binding</keyword>
<keyword id="KW-0658">Purine biosynthesis</keyword>
<dbReference type="EC" id="6.3.4.4" evidence="1"/>
<dbReference type="EMBL" id="CP001091">
    <property type="protein sequence ID" value="ACE61785.1"/>
    <property type="molecule type" value="Genomic_DNA"/>
</dbReference>
<dbReference type="RefSeq" id="WP_005617565.1">
    <property type="nucleotide sequence ID" value="NC_010939.1"/>
</dbReference>
<dbReference type="SMR" id="B3H1V8"/>
<dbReference type="KEGG" id="apa:APP7_1133"/>
<dbReference type="HOGENOM" id="CLU_029848_0_0_6"/>
<dbReference type="UniPathway" id="UPA00075">
    <property type="reaction ID" value="UER00335"/>
</dbReference>
<dbReference type="Proteomes" id="UP000001226">
    <property type="component" value="Chromosome"/>
</dbReference>
<dbReference type="GO" id="GO:0005737">
    <property type="term" value="C:cytoplasm"/>
    <property type="evidence" value="ECO:0007669"/>
    <property type="project" value="UniProtKB-SubCell"/>
</dbReference>
<dbReference type="GO" id="GO:0004019">
    <property type="term" value="F:adenylosuccinate synthase activity"/>
    <property type="evidence" value="ECO:0007669"/>
    <property type="project" value="UniProtKB-UniRule"/>
</dbReference>
<dbReference type="GO" id="GO:0005525">
    <property type="term" value="F:GTP binding"/>
    <property type="evidence" value="ECO:0007669"/>
    <property type="project" value="UniProtKB-UniRule"/>
</dbReference>
<dbReference type="GO" id="GO:0000287">
    <property type="term" value="F:magnesium ion binding"/>
    <property type="evidence" value="ECO:0007669"/>
    <property type="project" value="UniProtKB-UniRule"/>
</dbReference>
<dbReference type="GO" id="GO:0044208">
    <property type="term" value="P:'de novo' AMP biosynthetic process"/>
    <property type="evidence" value="ECO:0007669"/>
    <property type="project" value="UniProtKB-UniRule"/>
</dbReference>
<dbReference type="GO" id="GO:0046040">
    <property type="term" value="P:IMP metabolic process"/>
    <property type="evidence" value="ECO:0007669"/>
    <property type="project" value="TreeGrafter"/>
</dbReference>
<dbReference type="CDD" id="cd03108">
    <property type="entry name" value="AdSS"/>
    <property type="match status" value="1"/>
</dbReference>
<dbReference type="FunFam" id="1.10.300.10:FF:000001">
    <property type="entry name" value="Adenylosuccinate synthetase"/>
    <property type="match status" value="1"/>
</dbReference>
<dbReference type="FunFam" id="3.90.170.10:FF:000001">
    <property type="entry name" value="Adenylosuccinate synthetase"/>
    <property type="match status" value="1"/>
</dbReference>
<dbReference type="Gene3D" id="3.40.440.10">
    <property type="entry name" value="Adenylosuccinate Synthetase, subunit A, domain 1"/>
    <property type="match status" value="1"/>
</dbReference>
<dbReference type="Gene3D" id="1.10.300.10">
    <property type="entry name" value="Adenylosuccinate Synthetase, subunit A, domain 2"/>
    <property type="match status" value="1"/>
</dbReference>
<dbReference type="Gene3D" id="3.90.170.10">
    <property type="entry name" value="Adenylosuccinate Synthetase, subunit A, domain 3"/>
    <property type="match status" value="1"/>
</dbReference>
<dbReference type="HAMAP" id="MF_00011">
    <property type="entry name" value="Adenylosucc_synth"/>
    <property type="match status" value="1"/>
</dbReference>
<dbReference type="InterPro" id="IPR018220">
    <property type="entry name" value="Adenylosuccin_syn_GTP-bd"/>
</dbReference>
<dbReference type="InterPro" id="IPR033128">
    <property type="entry name" value="Adenylosuccin_syn_Lys_AS"/>
</dbReference>
<dbReference type="InterPro" id="IPR042109">
    <property type="entry name" value="Adenylosuccinate_synth_dom1"/>
</dbReference>
<dbReference type="InterPro" id="IPR042110">
    <property type="entry name" value="Adenylosuccinate_synth_dom2"/>
</dbReference>
<dbReference type="InterPro" id="IPR042111">
    <property type="entry name" value="Adenylosuccinate_synth_dom3"/>
</dbReference>
<dbReference type="InterPro" id="IPR001114">
    <property type="entry name" value="Adenylosuccinate_synthetase"/>
</dbReference>
<dbReference type="InterPro" id="IPR027417">
    <property type="entry name" value="P-loop_NTPase"/>
</dbReference>
<dbReference type="NCBIfam" id="NF002223">
    <property type="entry name" value="PRK01117.1"/>
    <property type="match status" value="1"/>
</dbReference>
<dbReference type="NCBIfam" id="TIGR00184">
    <property type="entry name" value="purA"/>
    <property type="match status" value="1"/>
</dbReference>
<dbReference type="PANTHER" id="PTHR11846">
    <property type="entry name" value="ADENYLOSUCCINATE SYNTHETASE"/>
    <property type="match status" value="1"/>
</dbReference>
<dbReference type="PANTHER" id="PTHR11846:SF0">
    <property type="entry name" value="ADENYLOSUCCINATE SYNTHETASE"/>
    <property type="match status" value="1"/>
</dbReference>
<dbReference type="Pfam" id="PF00709">
    <property type="entry name" value="Adenylsucc_synt"/>
    <property type="match status" value="1"/>
</dbReference>
<dbReference type="SMART" id="SM00788">
    <property type="entry name" value="Adenylsucc_synt"/>
    <property type="match status" value="1"/>
</dbReference>
<dbReference type="SUPFAM" id="SSF52540">
    <property type="entry name" value="P-loop containing nucleoside triphosphate hydrolases"/>
    <property type="match status" value="1"/>
</dbReference>
<dbReference type="PROSITE" id="PS01266">
    <property type="entry name" value="ADENYLOSUCCIN_SYN_1"/>
    <property type="match status" value="1"/>
</dbReference>
<dbReference type="PROSITE" id="PS00513">
    <property type="entry name" value="ADENYLOSUCCIN_SYN_2"/>
    <property type="match status" value="1"/>
</dbReference>
<sequence length="432" mass="47443">MGKSVAILGAQWGDEGKGKIVDLLTDRVKYVVRYQGGHNAGHTLIINGEKTVLRLIPSGILRDNVTCLIGNGVVLSPEALMKEMGELEARGINVRDRLKISEACPLILPYHVAMDHAREAALGKNKIGTTGRGIGPAYEDKVARRGLRVSDLFDKEAFAEKLKDILDYYNFQLVHYYKVEPVDFQKTLDDVFAIADVIKGMVADVTTLLHQARKDGVNILFEGAQGTMLDIDHGTYPFVTSSNTTAGGVATGSGFGPRNLDYVLGIIKAYCTRVGSGPFTTELFDEVGAEIARKGNEFGAVTGRPRRCGWFDAVAVRRAVQINSISGFCMTKLDVLDGFEELKICTAYKMPNGEIVEYAPMAAKDWKGVEPIYETMPGWSENTFRVTKREELPQAALDYIKRIEELVGVPVDILSTGPDRVETMILRDPFAA</sequence>
<feature type="chain" id="PRO_1000089264" description="Adenylosuccinate synthetase">
    <location>
        <begin position="1"/>
        <end position="432"/>
    </location>
</feature>
<feature type="active site" description="Proton acceptor" evidence="1">
    <location>
        <position position="14"/>
    </location>
</feature>
<feature type="active site" description="Proton donor" evidence="1">
    <location>
        <position position="42"/>
    </location>
</feature>
<feature type="binding site" evidence="1">
    <location>
        <begin position="13"/>
        <end position="19"/>
    </location>
    <ligand>
        <name>GTP</name>
        <dbReference type="ChEBI" id="CHEBI:37565"/>
    </ligand>
</feature>
<feature type="binding site" description="in other chain" evidence="1">
    <location>
        <begin position="14"/>
        <end position="17"/>
    </location>
    <ligand>
        <name>IMP</name>
        <dbReference type="ChEBI" id="CHEBI:58053"/>
        <note>ligand shared between dimeric partners</note>
    </ligand>
</feature>
<feature type="binding site" evidence="1">
    <location>
        <position position="14"/>
    </location>
    <ligand>
        <name>Mg(2+)</name>
        <dbReference type="ChEBI" id="CHEBI:18420"/>
    </ligand>
</feature>
<feature type="binding site" description="in other chain" evidence="1">
    <location>
        <begin position="39"/>
        <end position="42"/>
    </location>
    <ligand>
        <name>IMP</name>
        <dbReference type="ChEBI" id="CHEBI:58053"/>
        <note>ligand shared between dimeric partners</note>
    </ligand>
</feature>
<feature type="binding site" evidence="1">
    <location>
        <begin position="41"/>
        <end position="43"/>
    </location>
    <ligand>
        <name>GTP</name>
        <dbReference type="ChEBI" id="CHEBI:37565"/>
    </ligand>
</feature>
<feature type="binding site" evidence="1">
    <location>
        <position position="41"/>
    </location>
    <ligand>
        <name>Mg(2+)</name>
        <dbReference type="ChEBI" id="CHEBI:18420"/>
    </ligand>
</feature>
<feature type="binding site" description="in other chain" evidence="1">
    <location>
        <position position="130"/>
    </location>
    <ligand>
        <name>IMP</name>
        <dbReference type="ChEBI" id="CHEBI:58053"/>
        <note>ligand shared between dimeric partners</note>
    </ligand>
</feature>
<feature type="binding site" evidence="1">
    <location>
        <position position="144"/>
    </location>
    <ligand>
        <name>IMP</name>
        <dbReference type="ChEBI" id="CHEBI:58053"/>
        <note>ligand shared between dimeric partners</note>
    </ligand>
</feature>
<feature type="binding site" description="in other chain" evidence="1">
    <location>
        <position position="225"/>
    </location>
    <ligand>
        <name>IMP</name>
        <dbReference type="ChEBI" id="CHEBI:58053"/>
        <note>ligand shared between dimeric partners</note>
    </ligand>
</feature>
<feature type="binding site" description="in other chain" evidence="1">
    <location>
        <position position="240"/>
    </location>
    <ligand>
        <name>IMP</name>
        <dbReference type="ChEBI" id="CHEBI:58053"/>
        <note>ligand shared between dimeric partners</note>
    </ligand>
</feature>
<feature type="binding site" evidence="1">
    <location>
        <begin position="300"/>
        <end position="306"/>
    </location>
    <ligand>
        <name>substrate</name>
    </ligand>
</feature>
<feature type="binding site" description="in other chain" evidence="1">
    <location>
        <position position="304"/>
    </location>
    <ligand>
        <name>IMP</name>
        <dbReference type="ChEBI" id="CHEBI:58053"/>
        <note>ligand shared between dimeric partners</note>
    </ligand>
</feature>
<feature type="binding site" evidence="1">
    <location>
        <position position="306"/>
    </location>
    <ligand>
        <name>GTP</name>
        <dbReference type="ChEBI" id="CHEBI:37565"/>
    </ligand>
</feature>
<feature type="binding site" evidence="1">
    <location>
        <begin position="332"/>
        <end position="334"/>
    </location>
    <ligand>
        <name>GTP</name>
        <dbReference type="ChEBI" id="CHEBI:37565"/>
    </ligand>
</feature>
<feature type="binding site" evidence="1">
    <location>
        <begin position="415"/>
        <end position="417"/>
    </location>
    <ligand>
        <name>GTP</name>
        <dbReference type="ChEBI" id="CHEBI:37565"/>
    </ligand>
</feature>
<reference key="1">
    <citation type="submission" date="2008-06" db="EMBL/GenBank/DDBJ databases">
        <title>Genome and proteome analysis of A. pleuropneumoniae serotype 7.</title>
        <authorList>
            <person name="Linke B."/>
            <person name="Buettner F."/>
            <person name="Martinez-Arias R."/>
            <person name="Goesmann A."/>
            <person name="Baltes N."/>
            <person name="Tegetmeyer H."/>
            <person name="Singh M."/>
            <person name="Gerlach G.F."/>
        </authorList>
    </citation>
    <scope>NUCLEOTIDE SEQUENCE [LARGE SCALE GENOMIC DNA]</scope>
    <source>
        <strain>AP76</strain>
    </source>
</reference>
<proteinExistence type="inferred from homology"/>